<name>GPKOW_XENLA</name>
<dbReference type="EMBL" id="BC068795">
    <property type="protein sequence ID" value="AAH68795.1"/>
    <property type="molecule type" value="mRNA"/>
</dbReference>
<dbReference type="RefSeq" id="NP_001084514.1">
    <property type="nucleotide sequence ID" value="NM_001091045.1"/>
</dbReference>
<dbReference type="SMR" id="Q6NU07"/>
<dbReference type="IntAct" id="Q6NU07">
    <property type="interactions" value="1"/>
</dbReference>
<dbReference type="DNASU" id="414461"/>
<dbReference type="GeneID" id="414461"/>
<dbReference type="KEGG" id="xla:414461"/>
<dbReference type="AGR" id="Xenbase:XB-GENE-943880"/>
<dbReference type="CTD" id="414461"/>
<dbReference type="Xenbase" id="XB-GENE-943880">
    <property type="gene designation" value="gpkow.S"/>
</dbReference>
<dbReference type="OMA" id="AHKDKEK"/>
<dbReference type="OrthoDB" id="5577072at2759"/>
<dbReference type="Proteomes" id="UP000186698">
    <property type="component" value="Chromosome 8S"/>
</dbReference>
<dbReference type="Bgee" id="414461">
    <property type="expression patterns" value="Expressed in egg cell and 19 other cell types or tissues"/>
</dbReference>
<dbReference type="GO" id="GO:0005634">
    <property type="term" value="C:nucleus"/>
    <property type="evidence" value="ECO:0000250"/>
    <property type="project" value="UniProtKB"/>
</dbReference>
<dbReference type="GO" id="GO:0005681">
    <property type="term" value="C:spliceosomal complex"/>
    <property type="evidence" value="ECO:0000250"/>
    <property type="project" value="UniProtKB"/>
</dbReference>
<dbReference type="GO" id="GO:0003723">
    <property type="term" value="F:RNA binding"/>
    <property type="evidence" value="ECO:0000250"/>
    <property type="project" value="UniProtKB"/>
</dbReference>
<dbReference type="GO" id="GO:0000398">
    <property type="term" value="P:mRNA splicing, via spliceosome"/>
    <property type="evidence" value="ECO:0000250"/>
    <property type="project" value="UniProtKB"/>
</dbReference>
<dbReference type="CDD" id="cd13152">
    <property type="entry name" value="KOW_GPKOW_A"/>
    <property type="match status" value="1"/>
</dbReference>
<dbReference type="CDD" id="cd13153">
    <property type="entry name" value="KOW_GPKOW_B"/>
    <property type="match status" value="1"/>
</dbReference>
<dbReference type="Gene3D" id="2.30.30.140">
    <property type="match status" value="1"/>
</dbReference>
<dbReference type="Gene3D" id="2.30.30.30">
    <property type="match status" value="2"/>
</dbReference>
<dbReference type="InterPro" id="IPR000467">
    <property type="entry name" value="G_patch_dom"/>
</dbReference>
<dbReference type="InterPro" id="IPR041993">
    <property type="entry name" value="GPKOW_KOW1"/>
</dbReference>
<dbReference type="InterPro" id="IPR041994">
    <property type="entry name" value="GPKOW_KOW2"/>
</dbReference>
<dbReference type="InterPro" id="IPR005824">
    <property type="entry name" value="KOW"/>
</dbReference>
<dbReference type="InterPro" id="IPR014722">
    <property type="entry name" value="Rib_uL2_dom2"/>
</dbReference>
<dbReference type="InterPro" id="IPR045166">
    <property type="entry name" value="Spp2-like"/>
</dbReference>
<dbReference type="InterPro" id="IPR026822">
    <property type="entry name" value="Spp2/MOS2_G-patch"/>
</dbReference>
<dbReference type="InterPro" id="IPR008991">
    <property type="entry name" value="Translation_prot_SH3-like_sf"/>
</dbReference>
<dbReference type="PANTHER" id="PTHR15818">
    <property type="entry name" value="G PATCH AND KOW-CONTAINING"/>
    <property type="match status" value="1"/>
</dbReference>
<dbReference type="PANTHER" id="PTHR15818:SF2">
    <property type="entry name" value="G-PATCH DOMAIN AND KOW MOTIFS-CONTAINING PROTEIN"/>
    <property type="match status" value="1"/>
</dbReference>
<dbReference type="Pfam" id="PF12656">
    <property type="entry name" value="G-patch_2"/>
    <property type="match status" value="1"/>
</dbReference>
<dbReference type="Pfam" id="PF25088">
    <property type="entry name" value="GPKOW_C"/>
    <property type="match status" value="1"/>
</dbReference>
<dbReference type="SMART" id="SM00443">
    <property type="entry name" value="G_patch"/>
    <property type="match status" value="1"/>
</dbReference>
<dbReference type="SMART" id="SM00739">
    <property type="entry name" value="KOW"/>
    <property type="match status" value="2"/>
</dbReference>
<dbReference type="SUPFAM" id="SSF50104">
    <property type="entry name" value="Translation proteins SH3-like domain"/>
    <property type="match status" value="1"/>
</dbReference>
<dbReference type="PROSITE" id="PS50174">
    <property type="entry name" value="G_PATCH"/>
    <property type="match status" value="1"/>
</dbReference>
<sequence>MAAAGSSQAPISFGFNRSSKKKLLVSDGEKEEEHEKEYLVGAEGKELLSANPAPESKPLVIPLIHKNRWAKPNKDKEEDAAPQTEDEAVLSQAVKELIEESRRAQEDNSETNQTLSIPLLMQNRMPDGYEDREKVDVSLRPDSAEAADYDVVPVQQYGMAMLRGMGWKEGEGIGRTFKQDVKPLEQKLRPKGLGLGADRSALKHLEPQKPRKPLKPGEEPEEESKGLGTGSAVQIQSGAYKDMYGKVEGIDPDNSRAMITLAIGGKVVTVSLFSLRLVNSAEYTKYAKDLSRLSKVHQESKVEPHRDRTPEKEQGRKGGEKRSESSRNADVKLSKSSGNGDSNNREKRHRQRSPEQEKEKKKIRPEPHGWLRRDIRVRFIDKNYKGGKYYNSKMLVEDVLSPTRCVCRTENGCILEDIRQDMLETIIPKEEGEHVMVVLGKYRGMVGKILHRDKQKSRALVQLQGEHDSAETLSYDAICHYTGAQDD</sequence>
<proteinExistence type="evidence at transcript level"/>
<accession>Q6NU07</accession>
<comment type="function">
    <text evidence="1">RNA-binding protein involved in pre-mRNA splicing.</text>
</comment>
<comment type="subunit">
    <text evidence="1">Component of the minor spliceosome, which splices U12-type introns.</text>
</comment>
<comment type="subcellular location">
    <subcellularLocation>
        <location evidence="1">Nucleus</location>
    </subcellularLocation>
</comment>
<comment type="similarity">
    <text evidence="5">Belongs to the MOS2 family.</text>
</comment>
<gene>
    <name type="primary">gpkow</name>
</gene>
<feature type="chain" id="PRO_0000280565" description="G-patch domain and KOW motifs-containing protein">
    <location>
        <begin position="1"/>
        <end position="487"/>
    </location>
</feature>
<feature type="domain" description="G-patch" evidence="3">
    <location>
        <begin position="154"/>
        <end position="200"/>
    </location>
</feature>
<feature type="domain" description="KOW 1">
    <location>
        <begin position="226"/>
        <end position="253"/>
    </location>
</feature>
<feature type="domain" description="KOW 2">
    <location>
        <begin position="428"/>
        <end position="455"/>
    </location>
</feature>
<feature type="region of interest" description="Disordered" evidence="4">
    <location>
        <begin position="65"/>
        <end position="121"/>
    </location>
</feature>
<feature type="region of interest" description="Disordered" evidence="4">
    <location>
        <begin position="181"/>
        <end position="232"/>
    </location>
</feature>
<feature type="region of interest" description="Disordered" evidence="4">
    <location>
        <begin position="295"/>
        <end position="367"/>
    </location>
</feature>
<feature type="coiled-coil region" evidence="2">
    <location>
        <begin position="88"/>
        <end position="116"/>
    </location>
</feature>
<feature type="compositionally biased region" description="Basic and acidic residues" evidence="4">
    <location>
        <begin position="96"/>
        <end position="106"/>
    </location>
</feature>
<feature type="compositionally biased region" description="Basic and acidic residues" evidence="4">
    <location>
        <begin position="200"/>
        <end position="209"/>
    </location>
</feature>
<feature type="compositionally biased region" description="Basic and acidic residues" evidence="4">
    <location>
        <begin position="295"/>
        <end position="333"/>
    </location>
</feature>
<feature type="compositionally biased region" description="Basic and acidic residues" evidence="4">
    <location>
        <begin position="352"/>
        <end position="367"/>
    </location>
</feature>
<evidence type="ECO:0000250" key="1">
    <source>
        <dbReference type="UniProtKB" id="Q92917"/>
    </source>
</evidence>
<evidence type="ECO:0000255" key="2"/>
<evidence type="ECO:0000255" key="3">
    <source>
        <dbReference type="PROSITE-ProRule" id="PRU00092"/>
    </source>
</evidence>
<evidence type="ECO:0000256" key="4">
    <source>
        <dbReference type="SAM" id="MobiDB-lite"/>
    </source>
</evidence>
<evidence type="ECO:0000305" key="5"/>
<organism>
    <name type="scientific">Xenopus laevis</name>
    <name type="common">African clawed frog</name>
    <dbReference type="NCBI Taxonomy" id="8355"/>
    <lineage>
        <taxon>Eukaryota</taxon>
        <taxon>Metazoa</taxon>
        <taxon>Chordata</taxon>
        <taxon>Craniata</taxon>
        <taxon>Vertebrata</taxon>
        <taxon>Euteleostomi</taxon>
        <taxon>Amphibia</taxon>
        <taxon>Batrachia</taxon>
        <taxon>Anura</taxon>
        <taxon>Pipoidea</taxon>
        <taxon>Pipidae</taxon>
        <taxon>Xenopodinae</taxon>
        <taxon>Xenopus</taxon>
        <taxon>Xenopus</taxon>
    </lineage>
</organism>
<keyword id="KW-0175">Coiled coil</keyword>
<keyword id="KW-0507">mRNA processing</keyword>
<keyword id="KW-0508">mRNA splicing</keyword>
<keyword id="KW-0539">Nucleus</keyword>
<keyword id="KW-1185">Reference proteome</keyword>
<keyword id="KW-0677">Repeat</keyword>
<keyword id="KW-0694">RNA-binding</keyword>
<protein>
    <recommendedName>
        <fullName>G-patch domain and KOW motifs-containing protein</fullName>
    </recommendedName>
</protein>
<reference key="1">
    <citation type="submission" date="2004-04" db="EMBL/GenBank/DDBJ databases">
        <authorList>
            <consortium name="NIH - Xenopus Gene Collection (XGC) project"/>
        </authorList>
    </citation>
    <scope>NUCLEOTIDE SEQUENCE [LARGE SCALE MRNA]</scope>
    <source>
        <tissue>Embryo</tissue>
    </source>
</reference>